<feature type="chain" id="PRO_0000287430" description="Girdin">
    <location>
        <begin position="1"/>
        <end position="1873"/>
    </location>
</feature>
<feature type="domain" description="Calponin-homology (CH)" evidence="3">
    <location>
        <begin position="12"/>
        <end position="132"/>
    </location>
</feature>
<feature type="region of interest" description="Disordered" evidence="4">
    <location>
        <begin position="816"/>
        <end position="841"/>
    </location>
</feature>
<feature type="region of interest" description="Disordered" evidence="4">
    <location>
        <begin position="1013"/>
        <end position="1034"/>
    </location>
</feature>
<feature type="region of interest" description="Phosphoinositide-binding" evidence="1">
    <location>
        <begin position="1390"/>
        <end position="1408"/>
    </location>
</feature>
<feature type="region of interest" description="Disordered" evidence="4">
    <location>
        <begin position="1407"/>
        <end position="1459"/>
    </location>
</feature>
<feature type="region of interest" description="Disordered" evidence="4">
    <location>
        <begin position="1560"/>
        <end position="1602"/>
    </location>
</feature>
<feature type="region of interest" description="Disordered" evidence="4">
    <location>
        <begin position="1616"/>
        <end position="1643"/>
    </location>
</feature>
<feature type="region of interest" description="SH2-like; required for interaction with growth factor receptors" evidence="1">
    <location>
        <begin position="1715"/>
        <end position="1825"/>
    </location>
</feature>
<feature type="region of interest" description="Disordered" evidence="4">
    <location>
        <begin position="1738"/>
        <end position="1873"/>
    </location>
</feature>
<feature type="coiled-coil region" evidence="2">
    <location>
        <begin position="196"/>
        <end position="425"/>
    </location>
</feature>
<feature type="coiled-coil region" evidence="2">
    <location>
        <begin position="458"/>
        <end position="1232"/>
    </location>
</feature>
<feature type="coiled-coil region" evidence="2">
    <location>
        <begin position="1268"/>
        <end position="1385"/>
    </location>
</feature>
<feature type="short sequence motif" description="GBA" evidence="1">
    <location>
        <begin position="1674"/>
        <end position="1704"/>
    </location>
</feature>
<feature type="compositionally biased region" description="Basic and acidic residues" evidence="4">
    <location>
        <begin position="1407"/>
        <end position="1416"/>
    </location>
</feature>
<feature type="compositionally biased region" description="Polar residues" evidence="4">
    <location>
        <begin position="1417"/>
        <end position="1430"/>
    </location>
</feature>
<feature type="compositionally biased region" description="Polar residues" evidence="4">
    <location>
        <begin position="1445"/>
        <end position="1459"/>
    </location>
</feature>
<feature type="compositionally biased region" description="Polar residues" evidence="4">
    <location>
        <begin position="1560"/>
        <end position="1579"/>
    </location>
</feature>
<feature type="compositionally biased region" description="Polar residues" evidence="4">
    <location>
        <begin position="1616"/>
        <end position="1626"/>
    </location>
</feature>
<feature type="compositionally biased region" description="Basic and acidic residues" evidence="4">
    <location>
        <begin position="1745"/>
        <end position="1755"/>
    </location>
</feature>
<feature type="compositionally biased region" description="Polar residues" evidence="4">
    <location>
        <begin position="1768"/>
        <end position="1781"/>
    </location>
</feature>
<feature type="compositionally biased region" description="Polar residues" evidence="4">
    <location>
        <begin position="1789"/>
        <end position="1801"/>
    </location>
</feature>
<feature type="compositionally biased region" description="Polar residues" evidence="4">
    <location>
        <begin position="1809"/>
        <end position="1820"/>
    </location>
</feature>
<feature type="compositionally biased region" description="Basic and acidic residues" evidence="4">
    <location>
        <begin position="1822"/>
        <end position="1832"/>
    </location>
</feature>
<feature type="compositionally biased region" description="Low complexity" evidence="4">
    <location>
        <begin position="1839"/>
        <end position="1852"/>
    </location>
</feature>
<feature type="compositionally biased region" description="Basic and acidic residues" evidence="4">
    <location>
        <begin position="1858"/>
        <end position="1873"/>
    </location>
</feature>
<feature type="modified residue" description="Phosphoserine" evidence="15">
    <location>
        <position position="233"/>
    </location>
</feature>
<feature type="modified residue" description="Phosphoserine" evidence="15">
    <location>
        <position position="237"/>
    </location>
</feature>
<feature type="modified residue" description="Phosphoserine" evidence="1">
    <location>
        <position position="449"/>
    </location>
</feature>
<feature type="modified residue" description="Phosphoserine" evidence="1">
    <location>
        <position position="1020"/>
    </location>
</feature>
<feature type="modified residue" description="Phosphoserine" evidence="1">
    <location>
        <position position="1387"/>
    </location>
</feature>
<feature type="modified residue" description="Phosphoserine; by PKB/AKT1" evidence="1">
    <location>
        <position position="1417"/>
    </location>
</feature>
<feature type="modified residue" description="Phosphothreonine" evidence="1">
    <location>
        <position position="1421"/>
    </location>
</feature>
<feature type="modified residue" description="Phosphoserine" evidence="14 15">
    <location>
        <position position="1677"/>
    </location>
</feature>
<feature type="modified residue" description="Phosphoserine" evidence="1">
    <location>
        <position position="1692"/>
    </location>
</feature>
<feature type="modified residue" description="Phosphoserine" evidence="1">
    <location>
        <position position="1719"/>
    </location>
</feature>
<feature type="modified residue" description="Phosphotyrosine" evidence="1">
    <location>
        <position position="1767"/>
    </location>
</feature>
<feature type="modified residue" description="Phosphotyrosine" evidence="1">
    <location>
        <position position="1801"/>
    </location>
</feature>
<feature type="modified residue" description="Phosphoserine" evidence="1">
    <location>
        <position position="1822"/>
    </location>
</feature>
<feature type="modified residue" description="Phosphoserine" evidence="1">
    <location>
        <position position="1839"/>
    </location>
</feature>
<feature type="splice variant" id="VSP_052410" description="In isoform 3." evidence="10">
    <location>
        <begin position="1000"/>
        <end position="1054"/>
    </location>
</feature>
<feature type="splice variant" id="VSP_052411" description="In isoform 2 and isoform 3." evidence="9">
    <original>MVALKRLPFLRNRPKDKDKMKACYRRSMS</original>
    <variation>T</variation>
    <location>
        <begin position="1463"/>
        <end position="1491"/>
    </location>
</feature>
<feature type="sequence conflict" description="In Ref. 2; CAI35999." evidence="10" ref="2">
    <location>
        <position position="952"/>
    </location>
</feature>
<feature type="sequence conflict" description="In Ref. 3; AAH37020." evidence="10" ref="3">
    <original>LQRQ</original>
    <variation>PRVR</variation>
    <location>
        <begin position="1086"/>
        <end position="1089"/>
    </location>
</feature>
<dbReference type="EMBL" id="AB087827">
    <property type="protein sequence ID" value="BAD98263.1"/>
    <property type="molecule type" value="mRNA"/>
</dbReference>
<dbReference type="EMBL" id="AL935054">
    <property type="protein sequence ID" value="CAI24877.1"/>
    <property type="status" value="ALT_SEQ"/>
    <property type="molecule type" value="Genomic_DNA"/>
</dbReference>
<dbReference type="EMBL" id="AL935054">
    <property type="protein sequence ID" value="CAI24878.1"/>
    <property type="molecule type" value="Genomic_DNA"/>
</dbReference>
<dbReference type="EMBL" id="BX284634">
    <property type="protein sequence ID" value="CAI24878.1"/>
    <property type="status" value="JOINED"/>
    <property type="molecule type" value="Genomic_DNA"/>
</dbReference>
<dbReference type="EMBL" id="BX284634">
    <property type="protein sequence ID" value="CAI35999.1"/>
    <property type="molecule type" value="Genomic_DNA"/>
</dbReference>
<dbReference type="EMBL" id="BX284634">
    <property type="protein sequence ID" value="CAI36000.1"/>
    <property type="molecule type" value="Genomic_DNA"/>
</dbReference>
<dbReference type="EMBL" id="BX284634">
    <property type="protein sequence ID" value="CAI36001.1"/>
    <property type="molecule type" value="Genomic_DNA"/>
</dbReference>
<dbReference type="EMBL" id="AL935054">
    <property type="protein sequence ID" value="CAI36001.1"/>
    <property type="status" value="JOINED"/>
    <property type="molecule type" value="Genomic_DNA"/>
</dbReference>
<dbReference type="EMBL" id="BX284634">
    <property type="protein sequence ID" value="CAI36002.1"/>
    <property type="molecule type" value="Genomic_DNA"/>
</dbReference>
<dbReference type="EMBL" id="BC037020">
    <property type="protein sequence ID" value="AAH37020.1"/>
    <property type="status" value="ALT_INIT"/>
    <property type="molecule type" value="mRNA"/>
</dbReference>
<dbReference type="EMBL" id="AK082771">
    <property type="protein sequence ID" value="BAC38612.1"/>
    <property type="molecule type" value="mRNA"/>
</dbReference>
<dbReference type="CCDS" id="CCDS24494.1">
    <molecule id="Q5SNZ0-2"/>
</dbReference>
<dbReference type="RefSeq" id="NP_001420346.1">
    <molecule id="Q5SNZ0-1"/>
    <property type="nucleotide sequence ID" value="NM_001433417.1"/>
</dbReference>
<dbReference type="RefSeq" id="NP_789811.2">
    <molecule id="Q5SNZ0-2"/>
    <property type="nucleotide sequence ID" value="NM_176841.5"/>
</dbReference>
<dbReference type="RefSeq" id="XP_006514518.1">
    <property type="nucleotide sequence ID" value="XM_006514455.3"/>
</dbReference>
<dbReference type="SMR" id="Q5SNZ0"/>
<dbReference type="BioGRID" id="224370">
    <property type="interactions" value="12"/>
</dbReference>
<dbReference type="FunCoup" id="Q5SNZ0">
    <property type="interactions" value="3148"/>
</dbReference>
<dbReference type="IntAct" id="Q5SNZ0">
    <property type="interactions" value="3"/>
</dbReference>
<dbReference type="STRING" id="10090.ENSMUSP00000048978"/>
<dbReference type="GlyGen" id="Q5SNZ0">
    <property type="glycosylation" value="3 sites, 2 N-linked glycans (2 sites)"/>
</dbReference>
<dbReference type="iPTMnet" id="Q5SNZ0"/>
<dbReference type="PhosphoSitePlus" id="Q5SNZ0"/>
<dbReference type="jPOST" id="Q5SNZ0"/>
<dbReference type="PaxDb" id="10090-ENSMUSP00000048978"/>
<dbReference type="PeptideAtlas" id="Q5SNZ0"/>
<dbReference type="ProteomicsDB" id="271329">
    <molecule id="Q5SNZ0-1"/>
</dbReference>
<dbReference type="ProteomicsDB" id="271330">
    <molecule id="Q5SNZ0-2"/>
</dbReference>
<dbReference type="ProteomicsDB" id="271331">
    <molecule id="Q5SNZ0-3"/>
</dbReference>
<dbReference type="Pumba" id="Q5SNZ0"/>
<dbReference type="Antibodypedia" id="47423">
    <property type="antibodies" value="253 antibodies from 35 providers"/>
</dbReference>
<dbReference type="DNASU" id="108686"/>
<dbReference type="Ensembl" id="ENSMUST00000040182.13">
    <molecule id="Q5SNZ0-2"/>
    <property type="protein sequence ID" value="ENSMUSP00000048978.7"/>
    <property type="gene ID" value="ENSMUSG00000032740.18"/>
</dbReference>
<dbReference type="GeneID" id="108686"/>
<dbReference type="KEGG" id="mmu:108686"/>
<dbReference type="UCSC" id="uc007igw.2">
    <molecule id="Q5SNZ0-2"/>
    <property type="organism name" value="mouse"/>
</dbReference>
<dbReference type="AGR" id="MGI:1925177"/>
<dbReference type="CTD" id="55704"/>
<dbReference type="MGI" id="MGI:1925177">
    <property type="gene designation" value="Ccdc88a"/>
</dbReference>
<dbReference type="VEuPathDB" id="HostDB:ENSMUSG00000032740"/>
<dbReference type="eggNOG" id="KOG4643">
    <property type="taxonomic scope" value="Eukaryota"/>
</dbReference>
<dbReference type="GeneTree" id="ENSGT00940000155559"/>
<dbReference type="HOGENOM" id="CLU_001421_1_0_1"/>
<dbReference type="InParanoid" id="Q5SNZ0"/>
<dbReference type="OMA" id="XEEKTEQ"/>
<dbReference type="PhylomeDB" id="Q5SNZ0"/>
<dbReference type="TreeFam" id="TF320231"/>
<dbReference type="Reactome" id="R-MMU-9696264">
    <property type="pathway name" value="RND3 GTPase cycle"/>
</dbReference>
<dbReference type="Reactome" id="R-MMU-9696273">
    <property type="pathway name" value="RND1 GTPase cycle"/>
</dbReference>
<dbReference type="BioGRID-ORCS" id="108686">
    <property type="hits" value="3 hits in 78 CRISPR screens"/>
</dbReference>
<dbReference type="CD-CODE" id="CE726F99">
    <property type="entry name" value="Postsynaptic density"/>
</dbReference>
<dbReference type="ChiTaRS" id="Ccdc88a">
    <property type="organism name" value="mouse"/>
</dbReference>
<dbReference type="PRO" id="PR:Q5SNZ0"/>
<dbReference type="Proteomes" id="UP000000589">
    <property type="component" value="Chromosome 11"/>
</dbReference>
<dbReference type="RNAct" id="Q5SNZ0">
    <property type="molecule type" value="protein"/>
</dbReference>
<dbReference type="Bgee" id="ENSMUSG00000032740">
    <property type="expression patterns" value="Expressed in rostral migratory stream and 252 other cell types or tissues"/>
</dbReference>
<dbReference type="ExpressionAtlas" id="Q5SNZ0">
    <property type="expression patterns" value="baseline and differential"/>
</dbReference>
<dbReference type="GO" id="GO:0031252">
    <property type="term" value="C:cell leading edge"/>
    <property type="evidence" value="ECO:0000314"/>
    <property type="project" value="MGI"/>
</dbReference>
<dbReference type="GO" id="GO:0005814">
    <property type="term" value="C:centriole"/>
    <property type="evidence" value="ECO:0007669"/>
    <property type="project" value="UniProtKB-SubCell"/>
</dbReference>
<dbReference type="GO" id="GO:0005813">
    <property type="term" value="C:centrosome"/>
    <property type="evidence" value="ECO:0007669"/>
    <property type="project" value="Ensembl"/>
</dbReference>
<dbReference type="GO" id="GO:0036064">
    <property type="term" value="C:ciliary basal body"/>
    <property type="evidence" value="ECO:0007669"/>
    <property type="project" value="Ensembl"/>
</dbReference>
<dbReference type="GO" id="GO:0031410">
    <property type="term" value="C:cytoplasmic vesicle"/>
    <property type="evidence" value="ECO:0000250"/>
    <property type="project" value="UniProtKB"/>
</dbReference>
<dbReference type="GO" id="GO:0005829">
    <property type="term" value="C:cytosol"/>
    <property type="evidence" value="ECO:0000250"/>
    <property type="project" value="UniProtKB"/>
</dbReference>
<dbReference type="GO" id="GO:0005783">
    <property type="term" value="C:endoplasmic reticulum"/>
    <property type="evidence" value="ECO:0000250"/>
    <property type="project" value="UniProtKB"/>
</dbReference>
<dbReference type="GO" id="GO:0005794">
    <property type="term" value="C:Golgi apparatus"/>
    <property type="evidence" value="ECO:0000250"/>
    <property type="project" value="UniProtKB"/>
</dbReference>
<dbReference type="GO" id="GO:0030027">
    <property type="term" value="C:lamellipodium"/>
    <property type="evidence" value="ECO:0000250"/>
    <property type="project" value="UniProtKB"/>
</dbReference>
<dbReference type="GO" id="GO:0016020">
    <property type="term" value="C:membrane"/>
    <property type="evidence" value="ECO:0000250"/>
    <property type="project" value="UniProtKB"/>
</dbReference>
<dbReference type="GO" id="GO:0005654">
    <property type="term" value="C:nucleoplasm"/>
    <property type="evidence" value="ECO:0007669"/>
    <property type="project" value="Ensembl"/>
</dbReference>
<dbReference type="GO" id="GO:0005886">
    <property type="term" value="C:plasma membrane"/>
    <property type="evidence" value="ECO:0000250"/>
    <property type="project" value="UniProtKB"/>
</dbReference>
<dbReference type="GO" id="GO:0003779">
    <property type="term" value="F:actin binding"/>
    <property type="evidence" value="ECO:0000250"/>
    <property type="project" value="UniProtKB"/>
</dbReference>
<dbReference type="GO" id="GO:0005154">
    <property type="term" value="F:epidermal growth factor receptor binding"/>
    <property type="evidence" value="ECO:0000250"/>
    <property type="project" value="UniProtKB"/>
</dbReference>
<dbReference type="GO" id="GO:0001965">
    <property type="term" value="F:G-protein alpha-subunit binding"/>
    <property type="evidence" value="ECO:0000250"/>
    <property type="project" value="UniProtKB"/>
</dbReference>
<dbReference type="GO" id="GO:0005092">
    <property type="term" value="F:GDP-dissociation inhibitor activity"/>
    <property type="evidence" value="ECO:0000250"/>
    <property type="project" value="UniProtKB"/>
</dbReference>
<dbReference type="GO" id="GO:0005085">
    <property type="term" value="F:guanyl-nucleotide exchange factor activity"/>
    <property type="evidence" value="ECO:0000250"/>
    <property type="project" value="UniProtKB"/>
</dbReference>
<dbReference type="GO" id="GO:0005158">
    <property type="term" value="F:insulin receptor binding"/>
    <property type="evidence" value="ECO:0000250"/>
    <property type="project" value="UniProtKB"/>
</dbReference>
<dbReference type="GO" id="GO:0008017">
    <property type="term" value="F:microtubule binding"/>
    <property type="evidence" value="ECO:0000314"/>
    <property type="project" value="UniProtKB"/>
</dbReference>
<dbReference type="GO" id="GO:0035091">
    <property type="term" value="F:phosphatidylinositol binding"/>
    <property type="evidence" value="ECO:0000250"/>
    <property type="project" value="UniProtKB"/>
</dbReference>
<dbReference type="GO" id="GO:0042803">
    <property type="term" value="F:protein homodimerization activity"/>
    <property type="evidence" value="ECO:0000250"/>
    <property type="project" value="UniProtKB"/>
</dbReference>
<dbReference type="GO" id="GO:0043422">
    <property type="term" value="F:protein kinase B binding"/>
    <property type="evidence" value="ECO:0000353"/>
    <property type="project" value="UniProtKB"/>
</dbReference>
<dbReference type="GO" id="GO:0005080">
    <property type="term" value="F:protein kinase C binding"/>
    <property type="evidence" value="ECO:0000250"/>
    <property type="project" value="UniProtKB"/>
</dbReference>
<dbReference type="GO" id="GO:0043539">
    <property type="term" value="F:protein serine/threonine kinase activator activity"/>
    <property type="evidence" value="ECO:0000314"/>
    <property type="project" value="UniProtKB"/>
</dbReference>
<dbReference type="GO" id="GO:0042169">
    <property type="term" value="F:SH2 domain binding"/>
    <property type="evidence" value="ECO:0000250"/>
    <property type="project" value="UniProtKB"/>
</dbReference>
<dbReference type="GO" id="GO:0043184">
    <property type="term" value="F:vascular endothelial growth factor receptor 2 binding"/>
    <property type="evidence" value="ECO:0000250"/>
    <property type="project" value="UniProtKB"/>
</dbReference>
<dbReference type="GO" id="GO:0016477">
    <property type="term" value="P:cell migration"/>
    <property type="evidence" value="ECO:0000250"/>
    <property type="project" value="UniProtKB"/>
</dbReference>
<dbReference type="GO" id="GO:0030705">
    <property type="term" value="P:cytoskeleton-dependent intracellular transport"/>
    <property type="evidence" value="ECO:0007669"/>
    <property type="project" value="InterPro"/>
</dbReference>
<dbReference type="GO" id="GO:0030032">
    <property type="term" value="P:lamellipodium assembly"/>
    <property type="evidence" value="ECO:0000250"/>
    <property type="project" value="UniProtKB"/>
</dbReference>
<dbReference type="GO" id="GO:0072660">
    <property type="term" value="P:maintenance of protein location in plasma membrane"/>
    <property type="evidence" value="ECO:0000250"/>
    <property type="project" value="UniProtKB"/>
</dbReference>
<dbReference type="GO" id="GO:0061024">
    <property type="term" value="P:membrane organization"/>
    <property type="evidence" value="ECO:0000250"/>
    <property type="project" value="UniProtKB"/>
</dbReference>
<dbReference type="GO" id="GO:0007399">
    <property type="term" value="P:nervous system development"/>
    <property type="evidence" value="ECO:0007669"/>
    <property type="project" value="UniProtKB-KW"/>
</dbReference>
<dbReference type="GO" id="GO:0045724">
    <property type="term" value="P:positive regulation of cilium assembly"/>
    <property type="evidence" value="ECO:0007669"/>
    <property type="project" value="Ensembl"/>
</dbReference>
<dbReference type="GO" id="GO:0045742">
    <property type="term" value="P:positive regulation of epidermal growth factor receptor signaling pathway"/>
    <property type="evidence" value="ECO:0000250"/>
    <property type="project" value="UniProtKB"/>
</dbReference>
<dbReference type="GO" id="GO:0051897">
    <property type="term" value="P:positive regulation of phosphatidylinositol 3-kinase/protein kinase B signal transduction"/>
    <property type="evidence" value="ECO:0000314"/>
    <property type="project" value="UniProtKB"/>
</dbReference>
<dbReference type="GO" id="GO:1903566">
    <property type="term" value="P:positive regulation of protein localization to cilium"/>
    <property type="evidence" value="ECO:0007669"/>
    <property type="project" value="Ensembl"/>
</dbReference>
<dbReference type="GO" id="GO:0051496">
    <property type="term" value="P:positive regulation of stress fiber assembly"/>
    <property type="evidence" value="ECO:0007669"/>
    <property type="project" value="Ensembl"/>
</dbReference>
<dbReference type="GO" id="GO:0032956">
    <property type="term" value="P:regulation of actin cytoskeleton organization"/>
    <property type="evidence" value="ECO:0000250"/>
    <property type="project" value="UniProtKB"/>
</dbReference>
<dbReference type="GO" id="GO:0042127">
    <property type="term" value="P:regulation of cell population proliferation"/>
    <property type="evidence" value="ECO:0000315"/>
    <property type="project" value="UniProtKB"/>
</dbReference>
<dbReference type="GO" id="GO:0010975">
    <property type="term" value="P:regulation of neuron projection development"/>
    <property type="evidence" value="ECO:0000314"/>
    <property type="project" value="UniProtKB"/>
</dbReference>
<dbReference type="GO" id="GO:0007264">
    <property type="term" value="P:small GTPase-mediated signal transduction"/>
    <property type="evidence" value="ECO:0000250"/>
    <property type="project" value="UniProtKB"/>
</dbReference>
<dbReference type="GO" id="GO:0031929">
    <property type="term" value="P:TOR signaling"/>
    <property type="evidence" value="ECO:0000314"/>
    <property type="project" value="UniProtKB"/>
</dbReference>
<dbReference type="CDD" id="cd22229">
    <property type="entry name" value="HkD_Girdin"/>
    <property type="match status" value="1"/>
</dbReference>
<dbReference type="FunFam" id="1.10.418.10:FF:000035">
    <property type="entry name" value="girdin isoform X1"/>
    <property type="match status" value="1"/>
</dbReference>
<dbReference type="Gene3D" id="1.10.418.10">
    <property type="entry name" value="Calponin-like domain"/>
    <property type="match status" value="1"/>
</dbReference>
<dbReference type="InterPro" id="IPR001715">
    <property type="entry name" value="CH_dom"/>
</dbReference>
<dbReference type="InterPro" id="IPR036872">
    <property type="entry name" value="CH_dom_sf"/>
</dbReference>
<dbReference type="InterPro" id="IPR043936">
    <property type="entry name" value="HOOK_N"/>
</dbReference>
<dbReference type="PANTHER" id="PTHR18947:SF30">
    <property type="entry name" value="GIRDIN"/>
    <property type="match status" value="1"/>
</dbReference>
<dbReference type="PANTHER" id="PTHR18947">
    <property type="entry name" value="HOOK PROTEINS"/>
    <property type="match status" value="1"/>
</dbReference>
<dbReference type="Pfam" id="PF19047">
    <property type="entry name" value="HOOK_N"/>
    <property type="match status" value="1"/>
</dbReference>
<dbReference type="SUPFAM" id="SSF116907">
    <property type="entry name" value="Hook domain"/>
    <property type="match status" value="1"/>
</dbReference>
<dbReference type="PROSITE" id="PS50021">
    <property type="entry name" value="CH"/>
    <property type="match status" value="1"/>
</dbReference>
<keyword id="KW-0025">Alternative splicing</keyword>
<keyword id="KW-1003">Cell membrane</keyword>
<keyword id="KW-0966">Cell projection</keyword>
<keyword id="KW-0970">Cilium biogenesis/degradation</keyword>
<keyword id="KW-0175">Coiled coil</keyword>
<keyword id="KW-0963">Cytoplasm</keyword>
<keyword id="KW-0968">Cytoplasmic vesicle</keyword>
<keyword id="KW-0206">Cytoskeleton</keyword>
<keyword id="KW-0344">Guanine-nucleotide releasing factor</keyword>
<keyword id="KW-0472">Membrane</keyword>
<keyword id="KW-0524">Neurogenesis</keyword>
<keyword id="KW-0597">Phosphoprotein</keyword>
<keyword id="KW-1185">Reference proteome</keyword>
<name>GRDN_MOUSE</name>
<gene>
    <name type="primary">Ccdc88a</name>
    <name type="synonym">Grdn</name>
    <name type="synonym">Kiaa1212</name>
</gene>
<protein>
    <recommendedName>
        <fullName>Girdin</fullName>
    </recommendedName>
    <alternativeName>
        <fullName>Akt phosphorylation enhancer</fullName>
        <shortName>APE</shortName>
    </alternativeName>
    <alternativeName>
        <fullName>Coiled-coil domain-containing protein 88A</fullName>
    </alternativeName>
    <alternativeName>
        <fullName>G alpha-interacting vesicle-associated protein</fullName>
        <shortName>GIV</shortName>
    </alternativeName>
    <alternativeName>
        <fullName>Girders of actin filament</fullName>
    </alternativeName>
    <alternativeName>
        <fullName>Hook-related protein 1</fullName>
        <shortName>HkRP1</shortName>
    </alternativeName>
</protein>
<organism>
    <name type="scientific">Mus musculus</name>
    <name type="common">Mouse</name>
    <dbReference type="NCBI Taxonomy" id="10090"/>
    <lineage>
        <taxon>Eukaryota</taxon>
        <taxon>Metazoa</taxon>
        <taxon>Chordata</taxon>
        <taxon>Craniata</taxon>
        <taxon>Vertebrata</taxon>
        <taxon>Euteleostomi</taxon>
        <taxon>Mammalia</taxon>
        <taxon>Eutheria</taxon>
        <taxon>Euarchontoglires</taxon>
        <taxon>Glires</taxon>
        <taxon>Rodentia</taxon>
        <taxon>Myomorpha</taxon>
        <taxon>Muroidea</taxon>
        <taxon>Muridae</taxon>
        <taxon>Murinae</taxon>
        <taxon>Mus</taxon>
        <taxon>Mus</taxon>
    </lineage>
</organism>
<comment type="function">
    <text evidence="1 5 7">Bifunctional modulator of guanine nucleotide-binding proteins (G proteins) (By similarity). Acts as a non-receptor guanine nucleotide exchange factor which binds to and activates guanine nucleotide-binding protein G(i) alpha subunits (By similarity). Also acts as a guanine nucleotide dissociation inhibitor for guanine nucleotide-binding protein G(s) subunit alpha GNAS (By similarity). Essential for cell migration (By similarity). Interacts in complex with G(i) alpha subunits with the EGFR receptor, retaining EGFR at the cell membrane following ligand stimulation and promoting EGFR signaling which triggers cell migration (By similarity). Binding to Gi-alpha subunits displaces the beta and gamma subunits from the heterotrimeric G-protein complex which enhances phosphoinositide 3-kinase (PI3K)-dependent phosphorylation and kinase activity of AKT1/PKB (By similarity). Phosphorylation of AKT1/PKB induces the phosphorylation of downstream effectors GSK3 and FOXO1/FKHR, and regulates DNA replication and cell proliferation (PubMed:15753085). Binds in its tyrosine-phosphorylated form to the phosphatidylinositol 3-kinase (PI3K) regulatory subunit PIK3R1 which enables recruitment of PIK3R1 to the EGFR receptor, enhancing PI3K activity and cell migration (By similarity). Plays a role as a key modulator of the AKT-mTOR signaling pathway, controlling the tempo of the process of newborn neuron integration during adult neurogenesis, including correct neuron positioning, dendritic development and synapse formation (PubMed:19778506). Inhibition of G(s) subunit alpha GNAS leads to reduced cellular levels of cAMP and suppression of cell proliferation (By similarity). Essential for the integrity of the actin cytoskeleton (By similarity). Required for formation of actin stress fibers and lamellipodia (By similarity). May be involved in membrane sorting in the early endosome (By similarity). Plays a role in ciliogenesis and cilium morphology and positioning and this may partly be through regulation of the localization of scaffolding protein CROCC/Rootletin (By similarity).</text>
</comment>
<comment type="subunit">
    <text evidence="1 5 6 7">Homodimer (By similarity). Interacts (via GBA motif) with guanine nucleotide-binding protein G(i) alpha subunits GNAI1, GNAI2 and GNAI3 (By similarity). Also interacts (via GNA motif) with guanine nucleotide-binding protein G(s) alpha subunit GNAS (By similarity). Interaction with G(i) alpha subunits occurs before interaction with GNAS and is regulated by phosphorylation; phosphorylation at Ser-1677 enhances binding to G(i) alpha subunits while phosphorylation at Ser-1692 abolishes G(i) alpha subunit binding, promoting binding to GNAS (By similarity). Interacts (via C-terminal SH2-like region) with growth factor receptors EGFR, INSR and KDR/VEGFR2 (via their autophosphorylated cytoplasmic tails) (By similarity). Forms a complex with EGFR and GNAI3 which leads to enhanced EGFR signaling and triggering of cell migration; ligand stimulation is required for recruitment of GNAI3 to the complex (By similarity). Interacts (tyrosine-phosphorylated form) with phosphatidylinositol 3-kinase (PI3K) regulatory subunit PIK3R1/p85a (via SH2 domains); the interaction enables recruitment of PIK3R1 to the EGFR receptor, enhancing PI3K activity and cell migration (By similarity). Interacts with serine/threonine-protein kinase PRKCQ; the interaction leads to phosphorylation of CCDC88A and inhibition of its guanine nucleotide exchange factor activity (By similarity). Interacts (via C-terminus) with DISC1; the interaction is direct (PubMed:19778506). Interacts with AKT proteins; the interaction is inhibited in the presence of DISC1 (PubMed:19778506). Interacts with AKT1/PKB (via C-terminus) (PubMed:15753085). The non-phosphorylated form interacts with phosphatidylinositol 4-phosphate [Pi(4)P] and weakly with phosphatidylinositol 3-phosphate [Pi(3)P] (By similarity). Interacts with microtubules (PubMed:15882442). Interacts with actin (By similarity).</text>
</comment>
<comment type="subcellular location">
    <subcellularLocation>
        <location evidence="1">Cell membrane</location>
        <topology evidence="10">Peripheral membrane protein</topology>
    </subcellularLocation>
    <subcellularLocation>
        <location evidence="1">Cytoplasm</location>
        <location evidence="1">Cytosol</location>
    </subcellularLocation>
    <subcellularLocation>
        <location evidence="1">Cytoplasmic vesicle</location>
    </subcellularLocation>
    <subcellularLocation>
        <location evidence="1">Cell projection</location>
        <location evidence="1">Lamellipodium</location>
    </subcellularLocation>
    <subcellularLocation>
        <location evidence="1">Cytoplasm</location>
        <location evidence="1">Cytoskeleton</location>
        <location evidence="1">Cilium basal body</location>
    </subcellularLocation>
    <subcellularLocation>
        <location evidence="1">Cytoplasm</location>
        <location evidence="1">Cytoskeleton</location>
        <location evidence="1">Microtubule organizing center</location>
        <location evidence="1">Centrosome</location>
        <location evidence="1">Centriole</location>
    </subcellularLocation>
    <text evidence="1">Localizes to the cytosol in unstimulated cells while EGF stimulation promotes membrane localization and guanine nucleotide exchange factor activity (By similarity). Localizes to the cell membrane through interaction with phosphoinositides (By similarity).</text>
</comment>
<comment type="alternative products">
    <event type="alternative splicing"/>
    <isoform>
        <id>Q5SNZ0-1</id>
        <name>1</name>
        <sequence type="displayed"/>
    </isoform>
    <isoform>
        <id>Q5SNZ0-2</id>
        <name evidence="5">2</name>
        <sequence type="described" ref="VSP_052411"/>
    </isoform>
    <isoform>
        <id>Q5SNZ0-3</id>
        <name>3</name>
        <sequence type="described" ref="VSP_052410 VSP_052411"/>
    </isoform>
</comment>
<comment type="tissue specificity">
    <text evidence="5 6 7">Expressed in the dentate gyrus, pyramidal cell layer of hippocampal regions CA1 and CA3 at postnatal 15. Expressed highly in neurons. Weakly in neuron progenitors (at protein level). Expressed in the dentate granule cell layer of the hippocampus. Expressed highly in the adult testis, moderately in the brain and at a low level in the spleen, lungs and fat.</text>
</comment>
<comment type="developmental stage">
    <text evidence="6">Temporally and spatially restricted during embryogenesis. At 10.5 dpc, expressed in the branchial arches, nasal processes, limbs, somites and dorsal root ganglia. At 11.5 dpc, expression persists at these sites in addition to the eye and fore-, mid- and hindbrain. By 12.5 dpc, expressed in the interdigital mesenchyme of the limbs. At 13.5 dpc, expression in the limbs flanks the digits and also appears in a subset of tendons in the hind- and forelimbs.</text>
</comment>
<comment type="domain">
    <text evidence="1">The GBA (G-alpha binding and activating) motif mediates binding to the alpha subunits of guanine nucleotide-binding proteins (G proteins).</text>
</comment>
<comment type="domain">
    <text evidence="1">In the presence of tyrosine-autophosphorylated growth factor receptors, the C-terminus folds into an SH2-like region which promotes the stable recruitment of CCDC88A to the growth factor receptors. The SH2-like region is phosphorylated by the growth factor receptors prior to completion of folding.</text>
</comment>
<comment type="PTM">
    <text evidence="1">Phosphorylation is induced by epidermal growth factor (EGF) in a phosphoinositide 3-kinase (PI3K)-dependent manner (By similarity). Phosphorylation by AKT1/PKB is necessary for the delocalization from the cell membrane and for cell migration (By similarity). Phosphorylated on tyrosine residues which promotes binding to phosphatidylinositol 3-kinase (PI3K) regulatory subunit PIK3R1/p85a and enhances PI3K activity (By similarity). Tyrosine-phosphorylated by both receptor and non-receptor tyrosine kinases in vitro (By similarity). Tyrosine phosphorylation is required for AKT1-dependent phosphorylation of Ser-1417 (By similarity). Phosphorylation at Ser-1692 by PRKCQ disrupts interaction with GNAI3 and inhibits guanine nucleotide exchange factor activity (By similarity).</text>
</comment>
<comment type="disruption phenotype">
    <text evidence="8">CCDC88A knockout mice display mesial-temporal lobe epilepsy and early demise, and structural brain developmental defects affecting the corpus callosum and cerebrum.</text>
</comment>
<comment type="similarity">
    <text evidence="10">Belongs to the CCDC88 family.</text>
</comment>
<comment type="sequence caution" evidence="10">
    <conflict type="erroneous initiation">
        <sequence resource="EMBL-CDS" id="AAH37020"/>
    </conflict>
</comment>
<comment type="sequence caution" evidence="10">
    <conflict type="erroneous gene model prediction">
        <sequence resource="EMBL-CDS" id="CAI24877"/>
    </conflict>
</comment>
<accession>Q5SNZ0</accession>
<accession>Q5M6X2</accession>
<accession>Q5M6X4</accession>
<accession>Q5M6X5</accession>
<accession>Q5SNZ1</accession>
<accession>Q8C486</accession>
<accession>Q8CFU7</accession>
<reference evidence="10 13" key="1">
    <citation type="journal article" date="2005" name="J. Biol. Chem.">
        <title>A novel protein kinase B (PKB)/AKT-binding protein enhances PKB kinase activity and regulates DNA synthesis.</title>
        <authorList>
            <person name="Anai M."/>
            <person name="Shojima N."/>
            <person name="Katagiri H."/>
            <person name="Ogihara T."/>
            <person name="Sakoda H."/>
            <person name="Onishi Y."/>
            <person name="Ono H."/>
            <person name="Fujishiro M."/>
            <person name="Fukushima Y."/>
            <person name="Horike N."/>
            <person name="Viana A."/>
            <person name="Kikuchi M."/>
            <person name="Noguchi N."/>
            <person name="Takahashi S."/>
            <person name="Takata K."/>
            <person name="Oka Y."/>
            <person name="Uchijima Y."/>
            <person name="Kurihara H."/>
            <person name="Asano T."/>
        </authorList>
    </citation>
    <scope>NUCLEOTIDE SEQUENCE [MRNA] (ISOFORM 2)</scope>
    <scope>FUNCTION</scope>
    <scope>INTERACTION WITH AKT1</scope>
    <scope>TISSUE SPECIFICITY</scope>
    <source>
        <tissue evidence="5">Embryo</tissue>
    </source>
</reference>
<reference key="2">
    <citation type="journal article" date="2009" name="PLoS Biol.">
        <title>Lineage-specific biology revealed by a finished genome assembly of the mouse.</title>
        <authorList>
            <person name="Church D.M."/>
            <person name="Goodstadt L."/>
            <person name="Hillier L.W."/>
            <person name="Zody M.C."/>
            <person name="Goldstein S."/>
            <person name="She X."/>
            <person name="Bult C.J."/>
            <person name="Agarwala R."/>
            <person name="Cherry J.L."/>
            <person name="DiCuccio M."/>
            <person name="Hlavina W."/>
            <person name="Kapustin Y."/>
            <person name="Meric P."/>
            <person name="Maglott D."/>
            <person name="Birtle Z."/>
            <person name="Marques A.C."/>
            <person name="Graves T."/>
            <person name="Zhou S."/>
            <person name="Teague B."/>
            <person name="Potamousis K."/>
            <person name="Churas C."/>
            <person name="Place M."/>
            <person name="Herschleb J."/>
            <person name="Runnheim R."/>
            <person name="Forrest D."/>
            <person name="Amos-Landgraf J."/>
            <person name="Schwartz D.C."/>
            <person name="Cheng Z."/>
            <person name="Lindblad-Toh K."/>
            <person name="Eichler E.E."/>
            <person name="Ponting C.P."/>
        </authorList>
    </citation>
    <scope>NUCLEOTIDE SEQUENCE [LARGE SCALE GENOMIC DNA]</scope>
    <source>
        <strain>C57BL/6J</strain>
    </source>
</reference>
<reference evidence="10 11" key="3">
    <citation type="journal article" date="2004" name="Genome Res.">
        <title>The status, quality, and expansion of the NIH full-length cDNA project: the Mammalian Gene Collection (MGC).</title>
        <authorList>
            <consortium name="The MGC Project Team"/>
        </authorList>
    </citation>
    <scope>NUCLEOTIDE SEQUENCE [LARGE SCALE MRNA] OF 1086-1873 (ISOFORMS 2/3)</scope>
    <source>
        <strain evidence="11">C57BL/6J</strain>
        <tissue evidence="11">Retina</tissue>
    </source>
</reference>
<reference evidence="10 12" key="4">
    <citation type="journal article" date="2005" name="Science">
        <title>The transcriptional landscape of the mammalian genome.</title>
        <authorList>
            <person name="Carninci P."/>
            <person name="Kasukawa T."/>
            <person name="Katayama S."/>
            <person name="Gough J."/>
            <person name="Frith M.C."/>
            <person name="Maeda N."/>
            <person name="Oyama R."/>
            <person name="Ravasi T."/>
            <person name="Lenhard B."/>
            <person name="Wells C."/>
            <person name="Kodzius R."/>
            <person name="Shimokawa K."/>
            <person name="Bajic V.B."/>
            <person name="Brenner S.E."/>
            <person name="Batalov S."/>
            <person name="Forrest A.R."/>
            <person name="Zavolan M."/>
            <person name="Davis M.J."/>
            <person name="Wilming L.G."/>
            <person name="Aidinis V."/>
            <person name="Allen J.E."/>
            <person name="Ambesi-Impiombato A."/>
            <person name="Apweiler R."/>
            <person name="Aturaliya R.N."/>
            <person name="Bailey T.L."/>
            <person name="Bansal M."/>
            <person name="Baxter L."/>
            <person name="Beisel K.W."/>
            <person name="Bersano T."/>
            <person name="Bono H."/>
            <person name="Chalk A.M."/>
            <person name="Chiu K.P."/>
            <person name="Choudhary V."/>
            <person name="Christoffels A."/>
            <person name="Clutterbuck D.R."/>
            <person name="Crowe M.L."/>
            <person name="Dalla E."/>
            <person name="Dalrymple B.P."/>
            <person name="de Bono B."/>
            <person name="Della Gatta G."/>
            <person name="di Bernardo D."/>
            <person name="Down T."/>
            <person name="Engstrom P."/>
            <person name="Fagiolini M."/>
            <person name="Faulkner G."/>
            <person name="Fletcher C.F."/>
            <person name="Fukushima T."/>
            <person name="Furuno M."/>
            <person name="Futaki S."/>
            <person name="Gariboldi M."/>
            <person name="Georgii-Hemming P."/>
            <person name="Gingeras T.R."/>
            <person name="Gojobori T."/>
            <person name="Green R.E."/>
            <person name="Gustincich S."/>
            <person name="Harbers M."/>
            <person name="Hayashi Y."/>
            <person name="Hensch T.K."/>
            <person name="Hirokawa N."/>
            <person name="Hill D."/>
            <person name="Huminiecki L."/>
            <person name="Iacono M."/>
            <person name="Ikeo K."/>
            <person name="Iwama A."/>
            <person name="Ishikawa T."/>
            <person name="Jakt M."/>
            <person name="Kanapin A."/>
            <person name="Katoh M."/>
            <person name="Kawasawa Y."/>
            <person name="Kelso J."/>
            <person name="Kitamura H."/>
            <person name="Kitano H."/>
            <person name="Kollias G."/>
            <person name="Krishnan S.P."/>
            <person name="Kruger A."/>
            <person name="Kummerfeld S.K."/>
            <person name="Kurochkin I.V."/>
            <person name="Lareau L.F."/>
            <person name="Lazarevic D."/>
            <person name="Lipovich L."/>
            <person name="Liu J."/>
            <person name="Liuni S."/>
            <person name="McWilliam S."/>
            <person name="Madan Babu M."/>
            <person name="Madera M."/>
            <person name="Marchionni L."/>
            <person name="Matsuda H."/>
            <person name="Matsuzawa S."/>
            <person name="Miki H."/>
            <person name="Mignone F."/>
            <person name="Miyake S."/>
            <person name="Morris K."/>
            <person name="Mottagui-Tabar S."/>
            <person name="Mulder N."/>
            <person name="Nakano N."/>
            <person name="Nakauchi H."/>
            <person name="Ng P."/>
            <person name="Nilsson R."/>
            <person name="Nishiguchi S."/>
            <person name="Nishikawa S."/>
            <person name="Nori F."/>
            <person name="Ohara O."/>
            <person name="Okazaki Y."/>
            <person name="Orlando V."/>
            <person name="Pang K.C."/>
            <person name="Pavan W.J."/>
            <person name="Pavesi G."/>
            <person name="Pesole G."/>
            <person name="Petrovsky N."/>
            <person name="Piazza S."/>
            <person name="Reed J."/>
            <person name="Reid J.F."/>
            <person name="Ring B.Z."/>
            <person name="Ringwald M."/>
            <person name="Rost B."/>
            <person name="Ruan Y."/>
            <person name="Salzberg S.L."/>
            <person name="Sandelin A."/>
            <person name="Schneider C."/>
            <person name="Schoenbach C."/>
            <person name="Sekiguchi K."/>
            <person name="Semple C.A."/>
            <person name="Seno S."/>
            <person name="Sessa L."/>
            <person name="Sheng Y."/>
            <person name="Shibata Y."/>
            <person name="Shimada H."/>
            <person name="Shimada K."/>
            <person name="Silva D."/>
            <person name="Sinclair B."/>
            <person name="Sperling S."/>
            <person name="Stupka E."/>
            <person name="Sugiura K."/>
            <person name="Sultana R."/>
            <person name="Takenaka Y."/>
            <person name="Taki K."/>
            <person name="Tammoja K."/>
            <person name="Tan S.L."/>
            <person name="Tang S."/>
            <person name="Taylor M.S."/>
            <person name="Tegner J."/>
            <person name="Teichmann S.A."/>
            <person name="Ueda H.R."/>
            <person name="van Nimwegen E."/>
            <person name="Verardo R."/>
            <person name="Wei C.L."/>
            <person name="Yagi K."/>
            <person name="Yamanishi H."/>
            <person name="Zabarovsky E."/>
            <person name="Zhu S."/>
            <person name="Zimmer A."/>
            <person name="Hide W."/>
            <person name="Bult C."/>
            <person name="Grimmond S.M."/>
            <person name="Teasdale R.D."/>
            <person name="Liu E.T."/>
            <person name="Brusic V."/>
            <person name="Quackenbush J."/>
            <person name="Wahlestedt C."/>
            <person name="Mattick J.S."/>
            <person name="Hume D.A."/>
            <person name="Kai C."/>
            <person name="Sasaki D."/>
            <person name="Tomaru Y."/>
            <person name="Fukuda S."/>
            <person name="Kanamori-Katayama M."/>
            <person name="Suzuki M."/>
            <person name="Aoki J."/>
            <person name="Arakawa T."/>
            <person name="Iida J."/>
            <person name="Imamura K."/>
            <person name="Itoh M."/>
            <person name="Kato T."/>
            <person name="Kawaji H."/>
            <person name="Kawagashira N."/>
            <person name="Kawashima T."/>
            <person name="Kojima M."/>
            <person name="Kondo S."/>
            <person name="Konno H."/>
            <person name="Nakano K."/>
            <person name="Ninomiya N."/>
            <person name="Nishio T."/>
            <person name="Okada M."/>
            <person name="Plessy C."/>
            <person name="Shibata K."/>
            <person name="Shiraki T."/>
            <person name="Suzuki S."/>
            <person name="Tagami M."/>
            <person name="Waki K."/>
            <person name="Watahiki A."/>
            <person name="Okamura-Oho Y."/>
            <person name="Suzuki H."/>
            <person name="Kawai J."/>
            <person name="Hayashizaki Y."/>
        </authorList>
    </citation>
    <scope>NUCLEOTIDE SEQUENCE [LARGE SCALE MRNA] OF 1623-1873</scope>
    <source>
        <strain evidence="12">C57BL/6J</strain>
        <tissue evidence="12">Embryonic stem cell</tissue>
    </source>
</reference>
<reference key="5">
    <citation type="journal article" date="2004" name="Mol. Cell. Proteomics">
        <title>Phosphoproteomic analysis of the developing mouse brain.</title>
        <authorList>
            <person name="Ballif B.A."/>
            <person name="Villen J."/>
            <person name="Beausoleil S.A."/>
            <person name="Schwartz D."/>
            <person name="Gygi S.P."/>
        </authorList>
    </citation>
    <scope>PHOSPHORYLATION [LARGE SCALE ANALYSIS] AT SER-1677</scope>
    <scope>IDENTIFICATION BY MASS SPECTROMETRY [LARGE SCALE ANALYSIS]</scope>
    <source>
        <tissue>Embryonic brain</tissue>
    </source>
</reference>
<reference key="6">
    <citation type="journal article" date="2005" name="Nat. Biotechnol.">
        <title>Immunoaffinity profiling of tyrosine phosphorylation in cancer cells.</title>
        <authorList>
            <person name="Rush J."/>
            <person name="Moritz A."/>
            <person name="Lee K.A."/>
            <person name="Guo A."/>
            <person name="Goss V.L."/>
            <person name="Spek E.J."/>
            <person name="Zhang H."/>
            <person name="Zha X.-M."/>
            <person name="Polakiewicz R.D."/>
            <person name="Comb M.J."/>
        </authorList>
    </citation>
    <scope>IDENTIFICATION BY MASS SPECTROMETRY [LARGE SCALE ANALYSIS]</scope>
</reference>
<reference evidence="10" key="7">
    <citation type="journal article" date="2005" name="Traffic">
        <title>A novel hook-related protein family and the characterization of hook-related protein 1.</title>
        <authorList>
            <person name="Simpson F."/>
            <person name="Martin S."/>
            <person name="Evans T.M."/>
            <person name="Kerr M."/>
            <person name="James D.E."/>
            <person name="Parton R.G."/>
            <person name="Teasdale R.D."/>
            <person name="Wicking C."/>
        </authorList>
    </citation>
    <scope>SUBUNIT</scope>
    <scope>TISSUE SPECIFICITY</scope>
    <scope>DEVELOPMENTAL STAGE</scope>
</reference>
<reference evidence="10" key="8">
    <citation type="journal article" date="2006" name="Ann. N. Y. Acad. Sci.">
        <title>Girdin, a novel actin-binding protein, and its family of proteins possess versatile functions in the Akt and Wnt signaling pathways.</title>
        <authorList>
            <person name="Enomoto A."/>
            <person name="Ping J."/>
            <person name="Takahashi M."/>
        </authorList>
    </citation>
    <scope>REVIEW</scope>
</reference>
<reference key="9">
    <citation type="journal article" date="2009" name="Neuron">
        <title>DISC1 regulates new neuron development in the adult brain via modulation of AKT-mTOR signaling through KIAA1212.</title>
        <authorList>
            <person name="Kim J.Y."/>
            <person name="Duan X."/>
            <person name="Liu C.Y."/>
            <person name="Jang M.H."/>
            <person name="Guo J.U."/>
            <person name="Pow-anpongkul N."/>
            <person name="Kang E."/>
            <person name="Song H."/>
            <person name="Ming G.L."/>
        </authorList>
    </citation>
    <scope>FUNCTION</scope>
    <scope>INTERACTION WITH DISC1 AND AKT PROTEINS</scope>
    <scope>TISSUE SPECIFICITY</scope>
</reference>
<reference key="10">
    <citation type="journal article" date="2010" name="Cell">
        <title>A tissue-specific atlas of mouse protein phosphorylation and expression.</title>
        <authorList>
            <person name="Huttlin E.L."/>
            <person name="Jedrychowski M.P."/>
            <person name="Elias J.E."/>
            <person name="Goswami T."/>
            <person name="Rad R."/>
            <person name="Beausoleil S.A."/>
            <person name="Villen J."/>
            <person name="Haas W."/>
            <person name="Sowa M.E."/>
            <person name="Gygi S.P."/>
        </authorList>
    </citation>
    <scope>PHOSPHORYLATION [LARGE SCALE ANALYSIS] AT SER-233; SER-237 AND SER-1677</scope>
    <scope>IDENTIFICATION BY MASS SPECTROMETRY [LARGE SCALE ANALYSIS]</scope>
    <source>
        <tissue>Brain</tissue>
        <tissue>Brown adipose tissue</tissue>
        <tissue>Heart</tissue>
        <tissue>Kidney</tissue>
        <tissue>Lung</tissue>
        <tissue>Spleen</tissue>
        <tissue>Testis</tissue>
    </source>
</reference>
<reference key="11">
    <citation type="journal article" date="2016" name="Brain">
        <title>CCDC88A mutations cause PEHO-like syndrome in humans and mouse.</title>
        <authorList>
            <person name="Nahorski M.S."/>
            <person name="Asai M."/>
            <person name="Wakeling E."/>
            <person name="Parker A."/>
            <person name="Asai N."/>
            <person name="Canham N."/>
            <person name="Holder S.E."/>
            <person name="Chen Y.C."/>
            <person name="Dyer J."/>
            <person name="Brady A.F."/>
            <person name="Takahashi M."/>
            <person name="Woods C.G."/>
        </authorList>
    </citation>
    <scope>DISRUPTION PHENOTYPE</scope>
</reference>
<sequence>MENEIFTPLLEQFMTSPLVTWVKTFGPLAAGNGTNLDEYVALVDGVFLNQVMLQINPKSESQRVNKKVNNDASLRIHNLSILVKQIKFYYQETLQQLIMMPLPDILIIGKNPFSEQGTEEVKKLLLLLLGCAVQCQKKEEFIEKIQGLDFDTKAAVAAHIQEVTHNQENVFDLQWMEVTDMSQEDIEPLLKNMVSHLRRLIDERDEHSETIVELSEERDGVHFLPHASSSAQSPCGSPGMKRTESRQHLSVELADAKAKIRRLRQELEEKTEQLLDCKQELEQIEVELKRLQQENMNLLSDARSARMYRDELDALREKAVRVDKLESELSRYKERLHDIEFYKARVEELKEDNQVLLETKTMLEDQLEGTRARSDKLHELEKENLQLKAKLHDMEMERDMDRKKIEELMEENMTLEMAQKQSMDESLHLGWELEQISRTSELAEAPQKSLGHEVNELTSSKLLKLEMENQSLTKTVEELRSTADSAAGSTSKILKVEKENQRLNKKVEILENEIIQEKQSLQNCQNLSKDLMKEKAQLEKTIETLRENSERQIKILEQENEHLNQTVSSLRQRSQISAEARVKDIEKENKILHESIKETCGKLSKIEFEKRQMKKELELYKEKGERAEELENELNHLGKENELLQKKITNLKITCEKLETLEQENSELERENRKFKKTLDSFKNLTFQLESLEKENSQLDEENLELRRSVESLKCASMRMAQLQLENKELESEKEQLRKGLELMRASFKKTERLEVSYQGLDTENQRLQKALENSNKKIQQLESELQDLEMENQTLQKSLEELKISSKRLEQLEKENKSLEQETSQLEKDKKQLEKENKRLRQQAEIKDTTLEENNVKIGNLEKENKTLFKEINVYKESCVRLKELEKENKELVKRATIDIKTLVTLREDLVSEKLKTQQMNNDLEKLTHELEKIGLNKERLLHDEQSTDDSRYKLLESKLESTLKKSLEIKEEKIAALEARLEESTNYNQQLRHELKTVKKNYEALKQRQDEERMVQSSIPVSGEDDKWGRESQEATRELLKVKDRLIEVERNNATLQAEKQALKTQLKQLETQNNNLQAQILALQRQTVSLQEQNTTLQTQNAKLQVENSTLNSQSTSLMNQNAQLLIQQSSLENENESIMKEREDLKSLYDALIKDHEKLELLHERQASEYESLISKHGTLKSAHKNLEVEHKDLEDRYNQLLKQKGQLEDLEKMIKTEQEKMLLESKNHEVVASEYKKLCGENDRLNYTYSQLLKETEILQMDHKNLKSVLNNSKLEQTRLEAEFSKLKEQYQQLDITSTKLNNQCELLSQLKGNLEEENRHLLDQIQTLMLQNRTLLEQNMESKDLFHVEQRQYIDKLNELRRQKEKLEEKIMDQYKFYDPSPPRRRGNWITLKMRKLIKSKKDINRERQKSLTLTPTRSDSSEGFLQLPHQDSQDSSSVGSNSLEDGQTLGTKKSSMVALKRLPFLRNRPKDKDKMKACYRRSMSMNDLVQSMVLAGGQWTGSTENLEVPDDISTGKRRKELGAMAFSTTAINFSTVNSSAAFRSKQLVNNKDTTSFEDISPQGISDDSSTGSRVHASRPASLDSGRTSTSNSNNNASLHEVKAGAVNIQSRPQSHSSGDFSLLHDHETWSSSGSSPIQYLKRQTRSSPMLQHKISETIESRAHHKMKAGSPGSEVVTLQQFLEESNKLTSIQLKSSSQENLLDEVMKSLSVSSDFLGKDKPVSCTLARSVSGKTPGDFYDRRTTKPEFLRTGPQKTEDAYTISSAGKPTPSTQGKIKLVKETSVSRQSKDSNPYATLPRASSVISTAEGTTRRTSIHDFLSKDSRLPVSVDSSPPTAGSSSTTASNVNKVQESRNSKSRSREQQSS</sequence>
<proteinExistence type="evidence at protein level"/>
<evidence type="ECO:0000250" key="1">
    <source>
        <dbReference type="UniProtKB" id="Q3V6T2"/>
    </source>
</evidence>
<evidence type="ECO:0000255" key="2"/>
<evidence type="ECO:0000255" key="3">
    <source>
        <dbReference type="PROSITE-ProRule" id="PRU00044"/>
    </source>
</evidence>
<evidence type="ECO:0000256" key="4">
    <source>
        <dbReference type="SAM" id="MobiDB-lite"/>
    </source>
</evidence>
<evidence type="ECO:0000269" key="5">
    <source>
    </source>
</evidence>
<evidence type="ECO:0000269" key="6">
    <source>
    </source>
</evidence>
<evidence type="ECO:0000269" key="7">
    <source>
    </source>
</evidence>
<evidence type="ECO:0000269" key="8">
    <source>
    </source>
</evidence>
<evidence type="ECO:0000303" key="9">
    <source>
    </source>
</evidence>
<evidence type="ECO:0000305" key="10"/>
<evidence type="ECO:0000312" key="11">
    <source>
        <dbReference type="EMBL" id="AAH37020.1"/>
    </source>
</evidence>
<evidence type="ECO:0000312" key="12">
    <source>
        <dbReference type="EMBL" id="BAC38612.1"/>
    </source>
</evidence>
<evidence type="ECO:0000312" key="13">
    <source>
        <dbReference type="EMBL" id="BAD98263.1"/>
    </source>
</evidence>
<evidence type="ECO:0007744" key="14">
    <source>
    </source>
</evidence>
<evidence type="ECO:0007744" key="15">
    <source>
    </source>
</evidence>